<organism>
    <name type="scientific">Sus scrofa</name>
    <name type="common">Pig</name>
    <dbReference type="NCBI Taxonomy" id="9823"/>
    <lineage>
        <taxon>Eukaryota</taxon>
        <taxon>Metazoa</taxon>
        <taxon>Chordata</taxon>
        <taxon>Craniata</taxon>
        <taxon>Vertebrata</taxon>
        <taxon>Euteleostomi</taxon>
        <taxon>Mammalia</taxon>
        <taxon>Eutheria</taxon>
        <taxon>Laurasiatheria</taxon>
        <taxon>Artiodactyla</taxon>
        <taxon>Suina</taxon>
        <taxon>Suidae</taxon>
        <taxon>Sus</taxon>
    </lineage>
</organism>
<protein>
    <recommendedName>
        <fullName evidence="9">Diamine oxidase [copper-containing]</fullName>
        <shortName evidence="7">Diamine oxidase</shortName>
        <ecNumber evidence="6">1.4.3.22</ecNumber>
    </recommendedName>
    <alternativeName>
        <fullName evidence="7">Amiloride-binding protein</fullName>
    </alternativeName>
    <alternativeName>
        <fullName evidence="2">Amine oxidase copper domain-containing protein 1</fullName>
    </alternativeName>
    <alternativeName>
        <fullName>Histaminase</fullName>
    </alternativeName>
</protein>
<gene>
    <name evidence="2" type="primary">AOC1</name>
    <name evidence="7" type="synonym">ABP</name>
    <name evidence="7" type="synonym">DAO</name>
</gene>
<accession>Q9TRC7</accession>
<accession>F1SSL3</accession>
<accession>Q29317</accession>
<keyword id="KW-0106">Calcium</keyword>
<keyword id="KW-1003">Cell membrane</keyword>
<keyword id="KW-0186">Copper</keyword>
<keyword id="KW-0903">Direct protein sequencing</keyword>
<keyword id="KW-1015">Disulfide bond</keyword>
<keyword id="KW-0325">Glycoprotein</keyword>
<keyword id="KW-0358">Heparin-binding</keyword>
<keyword id="KW-0472">Membrane</keyword>
<keyword id="KW-0479">Metal-binding</keyword>
<keyword id="KW-0560">Oxidoreductase</keyword>
<keyword id="KW-1185">Reference proteome</keyword>
<keyword id="KW-0964">Secreted</keyword>
<keyword id="KW-0732">Signal</keyword>
<keyword id="KW-0801">TPQ</keyword>
<evidence type="ECO:0000250" key="1">
    <source>
        <dbReference type="UniProtKB" id="P12807"/>
    </source>
</evidence>
<evidence type="ECO:0000250" key="2">
    <source>
        <dbReference type="UniProtKB" id="P19801"/>
    </source>
</evidence>
<evidence type="ECO:0000255" key="3"/>
<evidence type="ECO:0000269" key="4">
    <source>
    </source>
</evidence>
<evidence type="ECO:0000269" key="5">
    <source>
    </source>
</evidence>
<evidence type="ECO:0000269" key="6">
    <source>
    </source>
</evidence>
<evidence type="ECO:0000303" key="7">
    <source>
    </source>
</evidence>
<evidence type="ECO:0000305" key="8"/>
<evidence type="ECO:0000305" key="9">
    <source>
    </source>
</evidence>
<dbReference type="EC" id="1.4.3.22" evidence="6"/>
<dbReference type="EMBL" id="CU928555">
    <property type="status" value="NOT_ANNOTATED_CDS"/>
    <property type="molecule type" value="Genomic_DNA"/>
</dbReference>
<dbReference type="EMBL" id="F14708">
    <property type="protein sequence ID" value="CAA23203.1"/>
    <property type="molecule type" value="mRNA"/>
</dbReference>
<dbReference type="PIR" id="B54410">
    <property type="entry name" value="B54410"/>
</dbReference>
<dbReference type="RefSeq" id="XP_003134601.1">
    <property type="nucleotide sequence ID" value="XM_003134553.4"/>
</dbReference>
<dbReference type="RefSeq" id="XP_020934342.1">
    <property type="nucleotide sequence ID" value="XM_021078683.1"/>
</dbReference>
<dbReference type="RefSeq" id="XP_020934343.1">
    <property type="nucleotide sequence ID" value="XM_021078684.1"/>
</dbReference>
<dbReference type="RefSeq" id="XP_020934344.1">
    <property type="nucleotide sequence ID" value="XM_021078685.1"/>
</dbReference>
<dbReference type="RefSeq" id="XP_020934345.1">
    <property type="nucleotide sequence ID" value="XM_021078686.1"/>
</dbReference>
<dbReference type="SMR" id="Q9TRC7"/>
<dbReference type="FunCoup" id="Q9TRC7">
    <property type="interactions" value="62"/>
</dbReference>
<dbReference type="STRING" id="9823.ENSSSCP00000038000"/>
<dbReference type="BindingDB" id="Q9TRC7"/>
<dbReference type="ChEMBL" id="CHEMBL3108636"/>
<dbReference type="DrugBank" id="DB00594">
    <property type="generic name" value="Amiloride"/>
</dbReference>
<dbReference type="GlyConnect" id="46">
    <property type="glycosylation" value="17 N-Linked glycans"/>
</dbReference>
<dbReference type="GlyCosmos" id="Q9TRC7">
    <property type="glycosylation" value="3 sites, 33 glycans"/>
</dbReference>
<dbReference type="GlyGen" id="Q9TRC7">
    <property type="glycosylation" value="7 sites, 31 N-linked glycans (1 site)"/>
</dbReference>
<dbReference type="PaxDb" id="9823-ENSSSCP00000017422"/>
<dbReference type="PeptideAtlas" id="Q9TRC7"/>
<dbReference type="Ensembl" id="ENSSSCT00000037065.3">
    <property type="protein sequence ID" value="ENSSSCP00000038000.3"/>
    <property type="gene ID" value="ENSSSCG00000016442.6"/>
</dbReference>
<dbReference type="Ensembl" id="ENSSSCT00025044925.1">
    <property type="protein sequence ID" value="ENSSSCP00025019136.1"/>
    <property type="gene ID" value="ENSSSCG00025032943.1"/>
</dbReference>
<dbReference type="Ensembl" id="ENSSSCT00035019360.1">
    <property type="protein sequence ID" value="ENSSSCP00035006878.1"/>
    <property type="gene ID" value="ENSSSCG00035015210.1"/>
</dbReference>
<dbReference type="Ensembl" id="ENSSSCT00055038288.1">
    <property type="protein sequence ID" value="ENSSSCP00055030417.1"/>
    <property type="gene ID" value="ENSSSCG00055019473.1"/>
</dbReference>
<dbReference type="Ensembl" id="ENSSSCT00090002776">
    <property type="protein sequence ID" value="ENSSSCP00090001608"/>
    <property type="gene ID" value="ENSSSCG00090001737"/>
</dbReference>
<dbReference type="Ensembl" id="ENSSSCT00110074343">
    <property type="protein sequence ID" value="ENSSSCP00110052497"/>
    <property type="gene ID" value="ENSSSCG00110038926"/>
</dbReference>
<dbReference type="Ensembl" id="ENSSSCT00115024037">
    <property type="protein sequence ID" value="ENSSSCP00115022792"/>
    <property type="gene ID" value="ENSSSCG00115013858"/>
</dbReference>
<dbReference type="GeneID" id="100517436"/>
<dbReference type="KEGG" id="ssc:100517436"/>
<dbReference type="CTD" id="26"/>
<dbReference type="VGNC" id="VGNC:85375">
    <property type="gene designation" value="AOC1"/>
</dbReference>
<dbReference type="eggNOG" id="KOG1186">
    <property type="taxonomic scope" value="Eukaryota"/>
</dbReference>
<dbReference type="GeneTree" id="ENSGT00950000183207"/>
<dbReference type="InParanoid" id="Q9TRC7"/>
<dbReference type="OMA" id="PYNSQDV"/>
<dbReference type="OrthoDB" id="5379943at2759"/>
<dbReference type="TreeFam" id="TF314750"/>
<dbReference type="BioCyc" id="MetaCyc:MONOMER-14652"/>
<dbReference type="BRENDA" id="1.4.3.22">
    <property type="organism ID" value="6170"/>
</dbReference>
<dbReference type="Reactome" id="R-SSC-211945">
    <property type="pathway name" value="Phase I - Functionalization of compounds"/>
</dbReference>
<dbReference type="Reactome" id="R-SSC-6798695">
    <property type="pathway name" value="Neutrophil degranulation"/>
</dbReference>
<dbReference type="SABIO-RK" id="Q9TRC7"/>
<dbReference type="Proteomes" id="UP000008227">
    <property type="component" value="Chromosome 18"/>
</dbReference>
<dbReference type="Proteomes" id="UP000314985">
    <property type="component" value="Unplaced"/>
</dbReference>
<dbReference type="Proteomes" id="UP000694570">
    <property type="component" value="Unplaced"/>
</dbReference>
<dbReference type="Proteomes" id="UP000694571">
    <property type="component" value="Unplaced"/>
</dbReference>
<dbReference type="Proteomes" id="UP000694720">
    <property type="component" value="Unplaced"/>
</dbReference>
<dbReference type="Proteomes" id="UP000694722">
    <property type="component" value="Unplaced"/>
</dbReference>
<dbReference type="Proteomes" id="UP000694723">
    <property type="component" value="Unplaced"/>
</dbReference>
<dbReference type="Proteomes" id="UP000694724">
    <property type="component" value="Unplaced"/>
</dbReference>
<dbReference type="Proteomes" id="UP000694725">
    <property type="component" value="Unplaced"/>
</dbReference>
<dbReference type="Proteomes" id="UP000694726">
    <property type="component" value="Unplaced"/>
</dbReference>
<dbReference type="Proteomes" id="UP000694727">
    <property type="component" value="Unplaced"/>
</dbReference>
<dbReference type="Proteomes" id="UP000694728">
    <property type="component" value="Unplaced"/>
</dbReference>
<dbReference type="GO" id="GO:0005923">
    <property type="term" value="C:bicellular tight junction"/>
    <property type="evidence" value="ECO:0000250"/>
    <property type="project" value="UniProtKB"/>
</dbReference>
<dbReference type="GO" id="GO:0070062">
    <property type="term" value="C:extracellular exosome"/>
    <property type="evidence" value="ECO:0007669"/>
    <property type="project" value="Ensembl"/>
</dbReference>
<dbReference type="GO" id="GO:0005615">
    <property type="term" value="C:extracellular space"/>
    <property type="evidence" value="ECO:0000250"/>
    <property type="project" value="UniProtKB"/>
</dbReference>
<dbReference type="GO" id="GO:0005886">
    <property type="term" value="C:plasma membrane"/>
    <property type="evidence" value="ECO:0000314"/>
    <property type="project" value="UniProtKB"/>
</dbReference>
<dbReference type="GO" id="GO:0005509">
    <property type="term" value="F:calcium ion binding"/>
    <property type="evidence" value="ECO:0007669"/>
    <property type="project" value="Ensembl"/>
</dbReference>
<dbReference type="GO" id="GO:0005507">
    <property type="term" value="F:copper ion binding"/>
    <property type="evidence" value="ECO:0000250"/>
    <property type="project" value="UniProtKB"/>
</dbReference>
<dbReference type="GO" id="GO:0052597">
    <property type="term" value="F:diamine oxidase activity"/>
    <property type="evidence" value="ECO:0000314"/>
    <property type="project" value="UniProtKB"/>
</dbReference>
<dbReference type="GO" id="GO:0008201">
    <property type="term" value="F:heparin binding"/>
    <property type="evidence" value="ECO:0000250"/>
    <property type="project" value="UniProtKB"/>
</dbReference>
<dbReference type="GO" id="GO:0052598">
    <property type="term" value="F:histamine oxidase activity"/>
    <property type="evidence" value="ECO:0000250"/>
    <property type="project" value="UniProtKB"/>
</dbReference>
<dbReference type="GO" id="GO:0008131">
    <property type="term" value="F:primary methylamine oxidase activity"/>
    <property type="evidence" value="ECO:0000314"/>
    <property type="project" value="UniProtKB"/>
</dbReference>
<dbReference type="GO" id="GO:0042803">
    <property type="term" value="F:protein homodimerization activity"/>
    <property type="evidence" value="ECO:0007669"/>
    <property type="project" value="Ensembl"/>
</dbReference>
<dbReference type="GO" id="GO:0050232">
    <property type="term" value="F:putrescine oxidase activity"/>
    <property type="evidence" value="ECO:0000314"/>
    <property type="project" value="UniProtKB"/>
</dbReference>
<dbReference type="GO" id="GO:0048038">
    <property type="term" value="F:quinone binding"/>
    <property type="evidence" value="ECO:0007669"/>
    <property type="project" value="InterPro"/>
</dbReference>
<dbReference type="GO" id="GO:0009445">
    <property type="term" value="P:putrescine metabolic process"/>
    <property type="evidence" value="ECO:0000315"/>
    <property type="project" value="UniProtKB"/>
</dbReference>
<dbReference type="FunFam" id="2.70.98.20:FF:000002">
    <property type="entry name" value="Amine oxidase"/>
    <property type="match status" value="1"/>
</dbReference>
<dbReference type="FunFam" id="3.10.450.40:FF:000007">
    <property type="entry name" value="Amine oxidase"/>
    <property type="match status" value="1"/>
</dbReference>
<dbReference type="FunFam" id="3.10.450.40:FF:000009">
    <property type="entry name" value="Amine oxidase"/>
    <property type="match status" value="1"/>
</dbReference>
<dbReference type="Gene3D" id="3.10.450.40">
    <property type="match status" value="2"/>
</dbReference>
<dbReference type="Gene3D" id="2.70.98.20">
    <property type="entry name" value="Copper amine oxidase, catalytic domain"/>
    <property type="match status" value="1"/>
</dbReference>
<dbReference type="InterPro" id="IPR049947">
    <property type="entry name" value="Cu_Am_Ox_Cu-bd"/>
</dbReference>
<dbReference type="InterPro" id="IPR049948">
    <property type="entry name" value="Cu_Am_ox_TPQ-bd"/>
</dbReference>
<dbReference type="InterPro" id="IPR000269">
    <property type="entry name" value="Cu_amine_oxidase"/>
</dbReference>
<dbReference type="InterPro" id="IPR015798">
    <property type="entry name" value="Cu_amine_oxidase_C"/>
</dbReference>
<dbReference type="InterPro" id="IPR036460">
    <property type="entry name" value="Cu_amine_oxidase_C_sf"/>
</dbReference>
<dbReference type="InterPro" id="IPR016182">
    <property type="entry name" value="Cu_amine_oxidase_N-reg"/>
</dbReference>
<dbReference type="InterPro" id="IPR015800">
    <property type="entry name" value="Cu_amine_oxidase_N2"/>
</dbReference>
<dbReference type="InterPro" id="IPR015802">
    <property type="entry name" value="Cu_amine_oxidase_N3"/>
</dbReference>
<dbReference type="PANTHER" id="PTHR10638:SF3">
    <property type="entry name" value="AMILORIDE-SENSITIVE AMINE OXIDASE [COPPER-CONTAINING]"/>
    <property type="match status" value="1"/>
</dbReference>
<dbReference type="PANTHER" id="PTHR10638">
    <property type="entry name" value="COPPER AMINE OXIDASE"/>
    <property type="match status" value="1"/>
</dbReference>
<dbReference type="Pfam" id="PF01179">
    <property type="entry name" value="Cu_amine_oxid"/>
    <property type="match status" value="1"/>
</dbReference>
<dbReference type="Pfam" id="PF02727">
    <property type="entry name" value="Cu_amine_oxidN2"/>
    <property type="match status" value="1"/>
</dbReference>
<dbReference type="Pfam" id="PF02728">
    <property type="entry name" value="Cu_amine_oxidN3"/>
    <property type="match status" value="1"/>
</dbReference>
<dbReference type="PRINTS" id="PR00766">
    <property type="entry name" value="CUDAOXIDASE"/>
</dbReference>
<dbReference type="SUPFAM" id="SSF49998">
    <property type="entry name" value="Amine oxidase catalytic domain"/>
    <property type="match status" value="1"/>
</dbReference>
<dbReference type="SUPFAM" id="SSF54416">
    <property type="entry name" value="Amine oxidase N-terminal region"/>
    <property type="match status" value="2"/>
</dbReference>
<dbReference type="PROSITE" id="PS01164">
    <property type="entry name" value="COPPER_AMINE_OXID_1"/>
    <property type="match status" value="1"/>
</dbReference>
<dbReference type="PROSITE" id="PS01165">
    <property type="entry name" value="COPPER_AMINE_OXID_2"/>
    <property type="match status" value="1"/>
</dbReference>
<reference key="1">
    <citation type="submission" date="2009-11" db="EMBL/GenBank/DDBJ databases">
        <authorList>
            <consortium name="Porcine genome sequencing project"/>
        </authorList>
    </citation>
    <scope>NUCLEOTIDE SEQUENCE [LARGE SCALE GENOMIC DNA]</scope>
</reference>
<reference key="2">
    <citation type="journal article" date="1994" name="J. Biol. Chem.">
        <title>Diamine oxidase is the amiloride-binding protein and is inhibited by amiloride analogues.</title>
        <authorList>
            <person name="Novotny W.F."/>
            <person name="Chassande O."/>
            <person name="Baker M."/>
            <person name="Lazdunski M."/>
            <person name="Barbry P."/>
        </authorList>
    </citation>
    <scope>PROTEIN SEQUENCE OF 30-49</scope>
    <scope>FUNCTION</scope>
    <scope>CATALYTIC ACTIVITY</scope>
    <scope>ACTIVITY REGULATION</scope>
    <source>
        <tissue>Kidney</tissue>
    </source>
</reference>
<reference key="3">
    <citation type="journal article" date="1992" name="Biochemistry">
        <title>Identification of topaquinone and its consensus sequence in copper amine oxidases.</title>
        <authorList>
            <person name="Janes S.M."/>
            <person name="Palcic M.M."/>
            <person name="Scaman C.H."/>
            <person name="Smith A.J."/>
            <person name="Brown D.E."/>
            <person name="Dooley D.M."/>
            <person name="Mure M."/>
            <person name="Klinman J.P."/>
        </authorList>
    </citation>
    <scope>PROTEIN SEQUENCE OF 457-475</scope>
    <scope>COFACTOR</scope>
    <scope>ACTIVE SITE</scope>
    <scope>TOPAQUINONE AT TYR-464</scope>
    <source>
        <tissue>Kidney</tissue>
    </source>
</reference>
<reference key="4">
    <citation type="journal article" date="1996" name="Mamm. Genome">
        <title>Evaluation and characterization of a porcine small intestine cDNA library: analysis of 839 clones.</title>
        <authorList>
            <person name="Winteroe A.K."/>
            <person name="Fredholm M."/>
            <person name="Davies W."/>
        </authorList>
    </citation>
    <scope>NUCLEOTIDE SEQUENCE [MRNA] OF 508-610</scope>
    <source>
        <tissue>Small intestine</tissue>
    </source>
</reference>
<reference key="5">
    <citation type="journal article" date="2000" name="Carbohydr. Res.">
        <title>N-linked oligosaccharide structures in the diamine oxidase from porcine kidney.</title>
        <authorList>
            <person name="Huang Y."/>
            <person name="Mechref Y."/>
            <person name="Novotny M.V."/>
        </authorList>
    </citation>
    <scope>GLYCAN STRUCTURE</scope>
    <scope>IDENTIFICATION BY MASS SPECTROMETRY</scope>
    <source>
        <tissue>Kidney</tissue>
    </source>
</reference>
<name>AOC1_PIG</name>
<sequence>MGRGTLALGWAGAALLLLQMLAAAERSPRTPGGKAGVFADLSAQELKAVHSFLWSQKELKLEPSGTLTMAKNSVFLIEMLLPKKQHVLKFLDKGHRRPVREARAVIFFGAQEQPNVTEFAVGPLPTPRYMRDLPPRPGHQVSWASRPISKAEYALLSHKLQEATQPLRQFFRRTTGSSFGDCHEQCLTFTDVAPRGLASGQRRTWFILQRQMPGYFLHPTGLELLVDHGSTNAQDWTVEQVWYNGKFYRSPEELAQKYNDGEVDVVILEDPLAKGKDGESLPEPALFSFYQPRGDFAVTMHGPHVVQPQGPRYSLEGNRVMYGGWSFAFRLRSSSGLQILDVHFGGERIAYEVSVQEAVALYGGHTPAGMQTKYIDVGWGLGSVTHELAPDIDCPETATFLDALHHYDADGPVLYPRALCLFEMPTGVPLRRHFNSNFSGGFNFYAGLKGQVLVLRTTSTVYNYDYIWDFIFYPNGVMEAKMHATGYVHATFYTPEGLRYGTRLHTHLIGNMHTHLVNYRVDLDVAGTTNSFQTLQMELENITNPWSPRHRLVQPTLKQTRYSRERQAAFRFGQPLPKYLLITSPKENPWGHTRSYRLQLHSMADQVLPPGWQEERAVTWARYPLAVTRYRESELSSSSIYNQNDPWDPPVVFEEFLRNNENIEDEDLVAWVTVGFLHIPHSEDIPNTATPGNSVGFLLRPFNFFPEDPALASRDLVVVWPLENGSTYAQRWIPEEDQSCLKPPPFSYNGSYRPV</sequence>
<comment type="function">
    <text evidence="2 5 6">Catalyzes the oxidative deamination of primary amines to the corresponding aldehydes with the concomitant production of hydrogen peroxide and ammonia (PubMed:1457410, PubMed:8144586). Its preferred substrates in vitro are the diamines histamine and 1-methylhistamine and it could therefore play a role in allergic and immune responses (By similarity). Has a broad specificity for diamines and can also act on cadaverine and putrescine, two products of amino acid catabolism (PubMed:8144586). It could also act on polyamines, like spermidine and spermine though less efficiently, and regulate various biological processes (By similarity).</text>
</comment>
<comment type="catalytic activity">
    <reaction evidence="2">
        <text>histamine + O2 + H2O = imidazole-4-acetaldehyde + H2O2 + NH4(+)</text>
        <dbReference type="Rhea" id="RHEA:25625"/>
        <dbReference type="ChEBI" id="CHEBI:15377"/>
        <dbReference type="ChEBI" id="CHEBI:15379"/>
        <dbReference type="ChEBI" id="CHEBI:16240"/>
        <dbReference type="ChEBI" id="CHEBI:27398"/>
        <dbReference type="ChEBI" id="CHEBI:28938"/>
        <dbReference type="ChEBI" id="CHEBI:58432"/>
        <dbReference type="EC" id="1.4.3.22"/>
    </reaction>
    <physiologicalReaction direction="left-to-right" evidence="2">
        <dbReference type="Rhea" id="RHEA:25626"/>
    </physiologicalReaction>
</comment>
<comment type="catalytic activity">
    <reaction evidence="2">
        <text>N(tau)-methylhistamine + O2 + H2O = 1-methylimidazole-4-acetaldehyde + H2O2 + NH4(+)</text>
        <dbReference type="Rhea" id="RHEA:78367"/>
        <dbReference type="ChEBI" id="CHEBI:15377"/>
        <dbReference type="ChEBI" id="CHEBI:15379"/>
        <dbReference type="ChEBI" id="CHEBI:16240"/>
        <dbReference type="ChEBI" id="CHEBI:28104"/>
        <dbReference type="ChEBI" id="CHEBI:28938"/>
        <dbReference type="ChEBI" id="CHEBI:58600"/>
    </reaction>
    <physiologicalReaction direction="left-to-right" evidence="2">
        <dbReference type="Rhea" id="RHEA:78368"/>
    </physiologicalReaction>
</comment>
<comment type="catalytic activity">
    <reaction evidence="6">
        <text>putrescine + O2 + H2O = 4-aminobutanal + H2O2 + NH4(+)</text>
        <dbReference type="Rhea" id="RHEA:18273"/>
        <dbReference type="ChEBI" id="CHEBI:15377"/>
        <dbReference type="ChEBI" id="CHEBI:15379"/>
        <dbReference type="ChEBI" id="CHEBI:16240"/>
        <dbReference type="ChEBI" id="CHEBI:28938"/>
        <dbReference type="ChEBI" id="CHEBI:58264"/>
        <dbReference type="ChEBI" id="CHEBI:326268"/>
    </reaction>
    <physiologicalReaction direction="left-to-right" evidence="9">
        <dbReference type="Rhea" id="RHEA:18274"/>
    </physiologicalReaction>
</comment>
<comment type="catalytic activity">
    <reaction evidence="2">
        <text>cadaverine + O2 + H2O = 5-aminopentanal + H2O2 + NH4(+)</text>
        <dbReference type="Rhea" id="RHEA:69132"/>
        <dbReference type="ChEBI" id="CHEBI:15377"/>
        <dbReference type="ChEBI" id="CHEBI:15379"/>
        <dbReference type="ChEBI" id="CHEBI:16240"/>
        <dbReference type="ChEBI" id="CHEBI:28938"/>
        <dbReference type="ChEBI" id="CHEBI:58384"/>
        <dbReference type="ChEBI" id="CHEBI:144896"/>
    </reaction>
    <physiologicalReaction direction="left-to-right" evidence="2">
        <dbReference type="Rhea" id="RHEA:69133"/>
    </physiologicalReaction>
</comment>
<comment type="cofactor">
    <cofactor evidence="2">
        <name>Cu(2+)</name>
        <dbReference type="ChEBI" id="CHEBI:29036"/>
    </cofactor>
    <text evidence="2">Binds 1 copper ion per subunit.</text>
</comment>
<comment type="cofactor">
    <cofactor evidence="2">
        <name>Ca(2+)</name>
        <dbReference type="ChEBI" id="CHEBI:29108"/>
    </cofactor>
    <text evidence="2">Binds 2 calcium ions per subunit.</text>
</comment>
<comment type="cofactor">
    <cofactor evidence="5">
        <name>L-topaquinone</name>
        <dbReference type="ChEBI" id="CHEBI:79027"/>
    </cofactor>
    <text evidence="5">Contains 1 topaquinone per subunit.</text>
</comment>
<comment type="activity regulation">
    <text evidence="6">Inhibited by amiloride and amiloride analogs.</text>
</comment>
<comment type="subunit">
    <text evidence="2">Homodimer; disulfide-linked.</text>
</comment>
<comment type="subcellular location">
    <subcellularLocation>
        <location evidence="2">Secreted</location>
        <location evidence="2">Extracellular space</location>
    </subcellularLocation>
    <subcellularLocation>
        <location evidence="2">Cell membrane</location>
        <topology evidence="2">Peripheral membrane protein</topology>
        <orientation evidence="2">Extracellular side</orientation>
    </subcellularLocation>
</comment>
<comment type="PTM">
    <text evidence="1">Topaquinone (TPQ) is generated by copper-dependent autoxidation of a specific tyrosyl residue.</text>
</comment>
<comment type="PTM">
    <text evidence="4">N-glycosylated; the glycans are primarily linear, di-, or tribranched fucosylated complex type.</text>
</comment>
<comment type="similarity">
    <text evidence="8">Belongs to the copper/topaquinone oxidase family.</text>
</comment>
<proteinExistence type="evidence at protein level"/>
<feature type="signal peptide" evidence="3">
    <location>
        <begin position="1"/>
        <end position="24"/>
    </location>
</feature>
<feature type="chain" id="PRO_0000064100" description="Diamine oxidase [copper-containing]" evidence="3">
    <location>
        <begin position="25"/>
        <end position="755"/>
    </location>
</feature>
<feature type="active site" description="Proton acceptor" evidence="2">
    <location>
        <position position="376"/>
    </location>
</feature>
<feature type="active site" description="Schiff-base intermediate with substrate; via topaquinone" evidence="5">
    <location>
        <position position="464"/>
    </location>
</feature>
<feature type="binding site" evidence="2">
    <location>
        <position position="513"/>
    </location>
    <ligand>
        <name>Cu(2+)</name>
        <dbReference type="ChEBI" id="CHEBI:29036"/>
    </ligand>
</feature>
<feature type="binding site" evidence="2">
    <location>
        <position position="515"/>
    </location>
    <ligand>
        <name>Cu(2+)</name>
        <dbReference type="ChEBI" id="CHEBI:29036"/>
    </ligand>
</feature>
<feature type="binding site" evidence="2">
    <location>
        <position position="522"/>
    </location>
    <ligand>
        <name>Ca(2+)</name>
        <dbReference type="ChEBI" id="CHEBI:29108"/>
        <label>1</label>
    </ligand>
</feature>
<feature type="binding site" evidence="2">
    <location>
        <position position="523"/>
    </location>
    <ligand>
        <name>Ca(2+)</name>
        <dbReference type="ChEBI" id="CHEBI:29108"/>
        <label>1</label>
    </ligand>
</feature>
<feature type="binding site" evidence="2">
    <location>
        <position position="524"/>
    </location>
    <ligand>
        <name>Ca(2+)</name>
        <dbReference type="ChEBI" id="CHEBI:29108"/>
        <label>1</label>
    </ligand>
</feature>
<feature type="binding site" evidence="2">
    <location>
        <position position="565"/>
    </location>
    <ligand>
        <name>Ca(2+)</name>
        <dbReference type="ChEBI" id="CHEBI:29108"/>
        <label>2</label>
    </ligand>
</feature>
<feature type="binding site" evidence="2">
    <location>
        <position position="656"/>
    </location>
    <ligand>
        <name>Ca(2+)</name>
        <dbReference type="ChEBI" id="CHEBI:29108"/>
        <label>2</label>
    </ligand>
</feature>
<feature type="binding site" evidence="2">
    <location>
        <position position="659"/>
    </location>
    <ligand>
        <name>Ca(2+)</name>
        <dbReference type="ChEBI" id="CHEBI:29108"/>
        <label>2</label>
    </ligand>
</feature>
<feature type="binding site" evidence="2">
    <location>
        <position position="661"/>
    </location>
    <ligand>
        <name>Ca(2+)</name>
        <dbReference type="ChEBI" id="CHEBI:29108"/>
        <label>2</label>
    </ligand>
</feature>
<feature type="binding site" evidence="2">
    <location>
        <position position="667"/>
    </location>
    <ligand>
        <name>Ca(2+)</name>
        <dbReference type="ChEBI" id="CHEBI:29108"/>
        <label>1</label>
    </ligand>
</feature>
<feature type="binding site" evidence="2">
    <location>
        <position position="668"/>
    </location>
    <ligand>
        <name>Ca(2+)</name>
        <dbReference type="ChEBI" id="CHEBI:29108"/>
        <label>1</label>
    </ligand>
</feature>
<feature type="binding site" evidence="2">
    <location>
        <position position="678"/>
    </location>
    <ligand>
        <name>Cu(2+)</name>
        <dbReference type="ChEBI" id="CHEBI:29036"/>
    </ligand>
</feature>
<feature type="modified residue" description="2',4',5'-topaquinone" evidence="5">
    <location>
        <position position="464"/>
    </location>
</feature>
<feature type="glycosylation site" description="N-linked (GlcNAc...) asparagine" evidence="2">
    <location>
        <position position="115"/>
    </location>
</feature>
<feature type="glycosylation site" description="N-linked (GlcNAc...) asparagine" evidence="2">
    <location>
        <position position="541"/>
    </location>
</feature>
<feature type="glycosylation site" description="N-linked (GlcNAc...) asparagine" evidence="2">
    <location>
        <position position="749"/>
    </location>
</feature>
<feature type="disulfide bond" evidence="2">
    <location>
        <begin position="182"/>
        <end position="186"/>
    </location>
</feature>
<feature type="disulfide bond" evidence="2">
    <location>
        <begin position="394"/>
        <end position="420"/>
    </location>
</feature>
<feature type="disulfide bond" description="Interchain" evidence="2">
    <location>
        <position position="740"/>
    </location>
</feature>
<feature type="sequence conflict" description="In Ref. 2; AA sequence." evidence="8" ref="2">
    <original>G</original>
    <variation>P</variation>
    <location>
        <position position="33"/>
    </location>
</feature>
<feature type="sequence conflict" description="In Ref. 2; AA sequence." evidence="8" ref="2">
    <original>DLS</original>
    <variation>AGV</variation>
    <location>
        <begin position="40"/>
        <end position="42"/>
    </location>
</feature>
<feature type="sequence conflict" description="In Ref. 2; AA sequence." evidence="8" ref="2">
    <original>QE</original>
    <variation>ED</variation>
    <location>
        <begin position="44"/>
        <end position="45"/>
    </location>
</feature>
<feature type="sequence conflict" description="In Ref. 3; AA sequence." evidence="8" ref="3">
    <original>P</original>
    <variation>Y</variation>
    <location>
        <position position="474"/>
    </location>
</feature>
<feature type="sequence conflict" description="In Ref. 4; CAA23203." evidence="8" ref="4">
    <location>
        <position position="593"/>
    </location>
</feature>
<feature type="sequence conflict" description="In Ref. 4; CAA23203." evidence="8" ref="4">
    <original>SYR</original>
    <variation>AVP</variation>
    <location>
        <begin position="595"/>
        <end position="597"/>
    </location>
</feature>
<feature type="sequence conflict" description="In Ref. 4; CAA23203." evidence="8" ref="4">
    <original>S</original>
    <variation>F</variation>
    <location>
        <position position="602"/>
    </location>
</feature>